<protein>
    <recommendedName>
        <fullName evidence="1">Probable septum site-determining protein MinC</fullName>
    </recommendedName>
</protein>
<evidence type="ECO:0000255" key="1">
    <source>
        <dbReference type="HAMAP-Rule" id="MF_00267"/>
    </source>
</evidence>
<accession>C3L6Y1</accession>
<dbReference type="EMBL" id="CP001215">
    <property type="protein sequence ID" value="ACP12999.1"/>
    <property type="molecule type" value="Genomic_DNA"/>
</dbReference>
<dbReference type="RefSeq" id="WP_000391517.1">
    <property type="nucleotide sequence ID" value="NC_012581.1"/>
</dbReference>
<dbReference type="SMR" id="C3L6Y1"/>
<dbReference type="GeneID" id="93006651"/>
<dbReference type="KEGG" id="bah:BAMEG_4717"/>
<dbReference type="HOGENOM" id="CLU_048711_1_1_9"/>
<dbReference type="GO" id="GO:0000902">
    <property type="term" value="P:cell morphogenesis"/>
    <property type="evidence" value="ECO:0007669"/>
    <property type="project" value="InterPro"/>
</dbReference>
<dbReference type="GO" id="GO:0000917">
    <property type="term" value="P:division septum assembly"/>
    <property type="evidence" value="ECO:0007669"/>
    <property type="project" value="UniProtKB-KW"/>
</dbReference>
<dbReference type="GO" id="GO:1901891">
    <property type="term" value="P:regulation of cell septum assembly"/>
    <property type="evidence" value="ECO:0007669"/>
    <property type="project" value="InterPro"/>
</dbReference>
<dbReference type="FunFam" id="2.160.20.70:FF:000003">
    <property type="entry name" value="Probable septum site-determining protein MinC"/>
    <property type="match status" value="1"/>
</dbReference>
<dbReference type="FunFam" id="3.30.160.540:FF:000001">
    <property type="entry name" value="Probable septum site-determining protein MinC"/>
    <property type="match status" value="1"/>
</dbReference>
<dbReference type="Gene3D" id="2.160.20.70">
    <property type="match status" value="1"/>
</dbReference>
<dbReference type="Gene3D" id="3.30.160.540">
    <property type="match status" value="1"/>
</dbReference>
<dbReference type="HAMAP" id="MF_00267">
    <property type="entry name" value="MinC"/>
    <property type="match status" value="1"/>
</dbReference>
<dbReference type="InterPro" id="IPR016098">
    <property type="entry name" value="CAP/MinC_C"/>
</dbReference>
<dbReference type="InterPro" id="IPR013033">
    <property type="entry name" value="MinC"/>
</dbReference>
<dbReference type="InterPro" id="IPR036145">
    <property type="entry name" value="MinC_C_sf"/>
</dbReference>
<dbReference type="InterPro" id="IPR055219">
    <property type="entry name" value="MinC_N_1"/>
</dbReference>
<dbReference type="InterPro" id="IPR005526">
    <property type="entry name" value="Septum_form_inhib_MinC_C"/>
</dbReference>
<dbReference type="NCBIfam" id="TIGR01222">
    <property type="entry name" value="minC"/>
    <property type="match status" value="1"/>
</dbReference>
<dbReference type="PANTHER" id="PTHR34108">
    <property type="entry name" value="SEPTUM SITE-DETERMINING PROTEIN MINC"/>
    <property type="match status" value="1"/>
</dbReference>
<dbReference type="PANTHER" id="PTHR34108:SF1">
    <property type="entry name" value="SEPTUM SITE-DETERMINING PROTEIN MINC"/>
    <property type="match status" value="1"/>
</dbReference>
<dbReference type="Pfam" id="PF03775">
    <property type="entry name" value="MinC_C"/>
    <property type="match status" value="1"/>
</dbReference>
<dbReference type="Pfam" id="PF22642">
    <property type="entry name" value="MinC_N_1"/>
    <property type="match status" value="1"/>
</dbReference>
<dbReference type="SUPFAM" id="SSF63848">
    <property type="entry name" value="Cell-division inhibitor MinC, C-terminal domain"/>
    <property type="match status" value="1"/>
</dbReference>
<comment type="function">
    <text evidence="1">Cell division inhibitor that blocks the formation of polar Z ring septums. Rapidly oscillates between the poles of the cell to destabilize FtsZ filaments that have formed before they mature into polar Z rings. Prevents FtsZ polymerization.</text>
</comment>
<comment type="subunit">
    <text evidence="1">Interacts with MinD and FtsZ.</text>
</comment>
<comment type="similarity">
    <text evidence="1">Belongs to the MinC family.</text>
</comment>
<proteinExistence type="inferred from homology"/>
<sequence length="228" mass="25229">MEEKKQQNVTIKGTKDGITLHLDDCCSFSELLKELDEKLSTHYYDGDGRSLIEVHVKVGNRYLTEVQQEEIRTLIRNKKNLVVDSIESDVITKEEAIAWKEETEIVPISKIVRSGQVLHVKGNLLLIGDVNPGGTVIAGGNIFVVGSLRGIAHAGYYGDSDAVIAASVMNPMQLRISDVAMRAPEEKEDGAEAAECAYINENNHIVVDRLQLLTHLRPNLTKLERGIV</sequence>
<organism>
    <name type="scientific">Bacillus anthracis (strain CDC 684 / NRRL 3495)</name>
    <dbReference type="NCBI Taxonomy" id="568206"/>
    <lineage>
        <taxon>Bacteria</taxon>
        <taxon>Bacillati</taxon>
        <taxon>Bacillota</taxon>
        <taxon>Bacilli</taxon>
        <taxon>Bacillales</taxon>
        <taxon>Bacillaceae</taxon>
        <taxon>Bacillus</taxon>
        <taxon>Bacillus cereus group</taxon>
    </lineage>
</organism>
<reference key="1">
    <citation type="submission" date="2008-10" db="EMBL/GenBank/DDBJ databases">
        <title>Genome sequence of Bacillus anthracis str. CDC 684.</title>
        <authorList>
            <person name="Dodson R.J."/>
            <person name="Munk A.C."/>
            <person name="Brettin T."/>
            <person name="Bruce D."/>
            <person name="Detter C."/>
            <person name="Tapia R."/>
            <person name="Han C."/>
            <person name="Sutton G."/>
            <person name="Sims D."/>
        </authorList>
    </citation>
    <scope>NUCLEOTIDE SEQUENCE [LARGE SCALE GENOMIC DNA]</scope>
    <source>
        <strain>CDC 684 / NRRL 3495</strain>
    </source>
</reference>
<feature type="chain" id="PRO_1000191229" description="Probable septum site-determining protein MinC">
    <location>
        <begin position="1"/>
        <end position="228"/>
    </location>
</feature>
<name>MINC_BACAC</name>
<gene>
    <name evidence="1" type="primary">minC</name>
    <name type="ordered locus">BAMEG_4717</name>
</gene>
<keyword id="KW-0131">Cell cycle</keyword>
<keyword id="KW-0132">Cell division</keyword>
<keyword id="KW-0717">Septation</keyword>